<name>FTHS2_RUBXD</name>
<reference key="1">
    <citation type="submission" date="2006-06" db="EMBL/GenBank/DDBJ databases">
        <title>Complete sequence of Rubrobacter xylanophilus DSM 9941.</title>
        <authorList>
            <consortium name="US DOE Joint Genome Institute"/>
            <person name="Copeland A."/>
            <person name="Lucas S."/>
            <person name="Lapidus A."/>
            <person name="Barry K."/>
            <person name="Detter J.C."/>
            <person name="Glavina del Rio T."/>
            <person name="Hammon N."/>
            <person name="Israni S."/>
            <person name="Dalin E."/>
            <person name="Tice H."/>
            <person name="Pitluck S."/>
            <person name="Munk A.C."/>
            <person name="Brettin T."/>
            <person name="Bruce D."/>
            <person name="Han C."/>
            <person name="Tapia R."/>
            <person name="Gilna P."/>
            <person name="Schmutz J."/>
            <person name="Larimer F."/>
            <person name="Land M."/>
            <person name="Hauser L."/>
            <person name="Kyrpides N."/>
            <person name="Lykidis A."/>
            <person name="da Costa M.S."/>
            <person name="Rainey F.A."/>
            <person name="Empadinhas N."/>
            <person name="Jolivet E."/>
            <person name="Battista J.R."/>
            <person name="Richardson P."/>
        </authorList>
    </citation>
    <scope>NUCLEOTIDE SEQUENCE [LARGE SCALE GENOMIC DNA]</scope>
    <source>
        <strain>DSM 9941 / JCM 11954 / NBRC 16129 / PRD-1</strain>
    </source>
</reference>
<protein>
    <recommendedName>
        <fullName evidence="1">Formate--tetrahydrofolate ligase 2</fullName>
        <ecNumber evidence="1">6.3.4.3</ecNumber>
    </recommendedName>
    <alternativeName>
        <fullName evidence="1">Formyltetrahydrofolate synthetase 2</fullName>
        <shortName evidence="1">FHS 2</shortName>
        <shortName evidence="1">FTHFS 2</shortName>
    </alternativeName>
</protein>
<accession>Q1AVP8</accession>
<sequence>MGEALSNLEIARGAKLLPIEEVGRSMGLREERHLEPYGRHVAKVDLCAIEDLSERPKAKYILVSAITPTPLGEGKTTTTVGLGQAFSHIGKRATIAIRQASMGPAFGIKGGAAGGGYSQVVPMERLNLHLTGDLHAVTEAHNMLAAMIDNHLYHGNGLGIEPHSISWRRVMDVNDRSLRNIVIGLGARTDGVPRQSGFDITAASEVMAILALASSLEDLRERLGRIVIGHDREGNPVSAEDVRGAGAMAVILKEAIKPNLMQTLEGTPALVHAGPFGNIATGNSSVVADLIGIRTADYLITEAGFGADMGAERFFNIKCRISGLEPDAAVVVATVRALKAHSGRYQIKAGAPLPEELLEENPQDVLAGAENLKKQIENIKLHGVPAVVAINAFPTDHPSEHKAIEEAAKEVGARCAVCRHFTEGGKGAVELARALEETIEENERERRRGGGGSFRFLYPLEMPLKQKIETIAREVYGAEGVEYDAEALRALEGFERAGFGRLPVCLAKTHLSLSSDPALKGAPRGWKLSVREVRASVGAGFIYPICGQMRTMPGLSAHPAAERIDLDGEGNVVGLF</sequence>
<evidence type="ECO:0000255" key="1">
    <source>
        <dbReference type="HAMAP-Rule" id="MF_01543"/>
    </source>
</evidence>
<dbReference type="EC" id="6.3.4.3" evidence="1"/>
<dbReference type="EMBL" id="CP000386">
    <property type="protein sequence ID" value="ABG04530.1"/>
    <property type="molecule type" value="Genomic_DNA"/>
</dbReference>
<dbReference type="RefSeq" id="WP_011564547.1">
    <property type="nucleotide sequence ID" value="NC_008148.1"/>
</dbReference>
<dbReference type="SMR" id="Q1AVP8"/>
<dbReference type="STRING" id="266117.Rxyl_1568"/>
<dbReference type="KEGG" id="rxy:Rxyl_1568"/>
<dbReference type="eggNOG" id="COG2759">
    <property type="taxonomic scope" value="Bacteria"/>
</dbReference>
<dbReference type="HOGENOM" id="CLU_003601_3_3_11"/>
<dbReference type="OrthoDB" id="9761733at2"/>
<dbReference type="PhylomeDB" id="Q1AVP8"/>
<dbReference type="UniPathway" id="UPA00193"/>
<dbReference type="Proteomes" id="UP000006637">
    <property type="component" value="Chromosome"/>
</dbReference>
<dbReference type="GO" id="GO:0005524">
    <property type="term" value="F:ATP binding"/>
    <property type="evidence" value="ECO:0007669"/>
    <property type="project" value="UniProtKB-UniRule"/>
</dbReference>
<dbReference type="GO" id="GO:0004329">
    <property type="term" value="F:formate-tetrahydrofolate ligase activity"/>
    <property type="evidence" value="ECO:0007669"/>
    <property type="project" value="UniProtKB-UniRule"/>
</dbReference>
<dbReference type="GO" id="GO:0035999">
    <property type="term" value="P:tetrahydrofolate interconversion"/>
    <property type="evidence" value="ECO:0007669"/>
    <property type="project" value="UniProtKB-UniRule"/>
</dbReference>
<dbReference type="CDD" id="cd00477">
    <property type="entry name" value="FTHFS"/>
    <property type="match status" value="1"/>
</dbReference>
<dbReference type="FunFam" id="3.30.1510.10:FF:000001">
    <property type="entry name" value="Formate--tetrahydrofolate ligase"/>
    <property type="match status" value="1"/>
</dbReference>
<dbReference type="FunFam" id="3.10.410.10:FF:000001">
    <property type="entry name" value="Putative formate--tetrahydrofolate ligase"/>
    <property type="match status" value="1"/>
</dbReference>
<dbReference type="Gene3D" id="3.30.1510.10">
    <property type="entry name" value="Domain 2, N(10)-formyltetrahydrofolate synthetase"/>
    <property type="match status" value="1"/>
</dbReference>
<dbReference type="Gene3D" id="3.10.410.10">
    <property type="entry name" value="Formyltetrahydrofolate synthetase, domain 3"/>
    <property type="match status" value="1"/>
</dbReference>
<dbReference type="Gene3D" id="3.40.50.300">
    <property type="entry name" value="P-loop containing nucleotide triphosphate hydrolases"/>
    <property type="match status" value="1"/>
</dbReference>
<dbReference type="HAMAP" id="MF_01543">
    <property type="entry name" value="FTHFS"/>
    <property type="match status" value="1"/>
</dbReference>
<dbReference type="InterPro" id="IPR000559">
    <property type="entry name" value="Formate_THF_ligase"/>
</dbReference>
<dbReference type="InterPro" id="IPR020628">
    <property type="entry name" value="Formate_THF_ligase_CS"/>
</dbReference>
<dbReference type="InterPro" id="IPR027417">
    <property type="entry name" value="P-loop_NTPase"/>
</dbReference>
<dbReference type="NCBIfam" id="NF010030">
    <property type="entry name" value="PRK13505.1"/>
    <property type="match status" value="1"/>
</dbReference>
<dbReference type="Pfam" id="PF01268">
    <property type="entry name" value="FTHFS"/>
    <property type="match status" value="1"/>
</dbReference>
<dbReference type="SUPFAM" id="SSF52540">
    <property type="entry name" value="P-loop containing nucleoside triphosphate hydrolases"/>
    <property type="match status" value="1"/>
</dbReference>
<dbReference type="PROSITE" id="PS00721">
    <property type="entry name" value="FTHFS_1"/>
    <property type="match status" value="1"/>
</dbReference>
<dbReference type="PROSITE" id="PS00722">
    <property type="entry name" value="FTHFS_2"/>
    <property type="match status" value="1"/>
</dbReference>
<keyword id="KW-0067">ATP-binding</keyword>
<keyword id="KW-0436">Ligase</keyword>
<keyword id="KW-0547">Nucleotide-binding</keyword>
<keyword id="KW-0554">One-carbon metabolism</keyword>
<keyword id="KW-1185">Reference proteome</keyword>
<feature type="chain" id="PRO_0000293055" description="Formate--tetrahydrofolate ligase 2">
    <location>
        <begin position="1"/>
        <end position="576"/>
    </location>
</feature>
<feature type="binding site" evidence="1">
    <location>
        <begin position="69"/>
        <end position="76"/>
    </location>
    <ligand>
        <name>ATP</name>
        <dbReference type="ChEBI" id="CHEBI:30616"/>
    </ligand>
</feature>
<comment type="catalytic activity">
    <reaction evidence="1">
        <text>(6S)-5,6,7,8-tetrahydrofolate + formate + ATP = (6R)-10-formyltetrahydrofolate + ADP + phosphate</text>
        <dbReference type="Rhea" id="RHEA:20221"/>
        <dbReference type="ChEBI" id="CHEBI:15740"/>
        <dbReference type="ChEBI" id="CHEBI:30616"/>
        <dbReference type="ChEBI" id="CHEBI:43474"/>
        <dbReference type="ChEBI" id="CHEBI:57453"/>
        <dbReference type="ChEBI" id="CHEBI:195366"/>
        <dbReference type="ChEBI" id="CHEBI:456216"/>
        <dbReference type="EC" id="6.3.4.3"/>
    </reaction>
</comment>
<comment type="pathway">
    <text evidence="1">One-carbon metabolism; tetrahydrofolate interconversion.</text>
</comment>
<comment type="similarity">
    <text evidence="1">Belongs to the formate--tetrahydrofolate ligase family.</text>
</comment>
<organism>
    <name type="scientific">Rubrobacter xylanophilus (strain DSM 9941 / JCM 11954 / NBRC 16129 / PRD-1)</name>
    <dbReference type="NCBI Taxonomy" id="266117"/>
    <lineage>
        <taxon>Bacteria</taxon>
        <taxon>Bacillati</taxon>
        <taxon>Actinomycetota</taxon>
        <taxon>Rubrobacteria</taxon>
        <taxon>Rubrobacterales</taxon>
        <taxon>Rubrobacteraceae</taxon>
        <taxon>Rubrobacter</taxon>
    </lineage>
</organism>
<gene>
    <name evidence="1" type="primary">fhs2</name>
    <name type="ordered locus">Rxyl_1568</name>
</gene>
<proteinExistence type="inferred from homology"/>